<protein>
    <recommendedName>
        <fullName evidence="1">Small ribosomal subunit protein uS13</fullName>
    </recommendedName>
    <alternativeName>
        <fullName evidence="3">30S ribosomal protein S13</fullName>
    </alternativeName>
</protein>
<gene>
    <name evidence="1" type="primary">rpsM</name>
    <name type="ordered locus">CTL0771</name>
</gene>
<feature type="chain" id="PRO_1000141239" description="Small ribosomal subunit protein uS13">
    <location>
        <begin position="1"/>
        <end position="122"/>
    </location>
</feature>
<feature type="region of interest" description="Disordered" evidence="2">
    <location>
        <begin position="96"/>
        <end position="122"/>
    </location>
</feature>
<feature type="compositionally biased region" description="Basic residues" evidence="2">
    <location>
        <begin position="101"/>
        <end position="122"/>
    </location>
</feature>
<name>RS13_CHLT2</name>
<organism>
    <name type="scientific">Chlamydia trachomatis serovar L2 (strain ATCC VR-902B / DSM 19102 / 434/Bu)</name>
    <dbReference type="NCBI Taxonomy" id="471472"/>
    <lineage>
        <taxon>Bacteria</taxon>
        <taxon>Pseudomonadati</taxon>
        <taxon>Chlamydiota</taxon>
        <taxon>Chlamydiia</taxon>
        <taxon>Chlamydiales</taxon>
        <taxon>Chlamydiaceae</taxon>
        <taxon>Chlamydia/Chlamydophila group</taxon>
        <taxon>Chlamydia</taxon>
    </lineage>
</organism>
<reference key="1">
    <citation type="journal article" date="1995" name="J. Bacteriol.">
        <title>Chlamydia trachomatis RNA polymerase alpha subunit: sequence and structural analysis.</title>
        <authorList>
            <person name="Gu L.J."/>
            <person name="Wenman W.M."/>
            <person name="Remacha M."/>
            <person name="Meuser R.U."/>
            <person name="Coffin J.M."/>
            <person name="Kaul R."/>
        </authorList>
    </citation>
    <scope>NUCLEOTIDE SEQUENCE [GENOMIC DNA]</scope>
</reference>
<reference key="2">
    <citation type="journal article" date="2008" name="Genome Res.">
        <title>Chlamydia trachomatis: genome sequence analysis of lymphogranuloma venereum isolates.</title>
        <authorList>
            <person name="Thomson N.R."/>
            <person name="Holden M.T.G."/>
            <person name="Carder C."/>
            <person name="Lennard N."/>
            <person name="Lockey S.J."/>
            <person name="Marsh P."/>
            <person name="Skipp P."/>
            <person name="O'Connor C.D."/>
            <person name="Goodhead I."/>
            <person name="Norbertzcak H."/>
            <person name="Harris B."/>
            <person name="Ormond D."/>
            <person name="Rance R."/>
            <person name="Quail M.A."/>
            <person name="Parkhill J."/>
            <person name="Stephens R.S."/>
            <person name="Clarke I.N."/>
        </authorList>
    </citation>
    <scope>NUCLEOTIDE SEQUENCE [LARGE SCALE GENOMIC DNA]</scope>
    <source>
        <strain>ATCC VR-902B / DSM 19102 / 434/Bu</strain>
    </source>
</reference>
<reference key="3">
    <citation type="journal article" date="1994" name="Mol. Gen. Genet.">
        <title>Cloning and characterization of a secY homolog from Chlamydia trachomatis.</title>
        <authorList>
            <person name="Gu L.J."/>
            <person name="Remacha M."/>
            <person name="Wenman W.M."/>
            <person name="Kaul R."/>
        </authorList>
    </citation>
    <scope>NUCLEOTIDE SEQUENCE [GENOMIC DNA] OF 1-46</scope>
</reference>
<accession>B0B883</accession>
<accession>Q46448</accession>
<accession>Q46454</accession>
<evidence type="ECO:0000255" key="1">
    <source>
        <dbReference type="HAMAP-Rule" id="MF_01315"/>
    </source>
</evidence>
<evidence type="ECO:0000256" key="2">
    <source>
        <dbReference type="SAM" id="MobiDB-lite"/>
    </source>
</evidence>
<evidence type="ECO:0000305" key="3"/>
<dbReference type="EMBL" id="L33834">
    <property type="protein sequence ID" value="AAA74987.1"/>
    <property type="molecule type" value="Genomic_DNA"/>
</dbReference>
<dbReference type="EMBL" id="AM884176">
    <property type="protein sequence ID" value="CAP04209.1"/>
    <property type="molecule type" value="Genomic_DNA"/>
</dbReference>
<dbReference type="EMBL" id="L25077">
    <property type="protein sequence ID" value="AAC36889.1"/>
    <property type="molecule type" value="Unassigned_DNA"/>
</dbReference>
<dbReference type="PIR" id="I40744">
    <property type="entry name" value="I40744"/>
</dbReference>
<dbReference type="RefSeq" id="WP_009873866.1">
    <property type="nucleotide sequence ID" value="NC_010287.1"/>
</dbReference>
<dbReference type="RefSeq" id="YP_001654842.1">
    <property type="nucleotide sequence ID" value="NC_010287.1"/>
</dbReference>
<dbReference type="SMR" id="B0B883"/>
<dbReference type="KEGG" id="ctb:CTL0771"/>
<dbReference type="PATRIC" id="fig|471472.4.peg.827"/>
<dbReference type="HOGENOM" id="CLU_103849_1_2_0"/>
<dbReference type="Proteomes" id="UP001154402">
    <property type="component" value="Chromosome"/>
</dbReference>
<dbReference type="GO" id="GO:0005829">
    <property type="term" value="C:cytosol"/>
    <property type="evidence" value="ECO:0007669"/>
    <property type="project" value="TreeGrafter"/>
</dbReference>
<dbReference type="GO" id="GO:0015935">
    <property type="term" value="C:small ribosomal subunit"/>
    <property type="evidence" value="ECO:0007669"/>
    <property type="project" value="TreeGrafter"/>
</dbReference>
<dbReference type="GO" id="GO:0019843">
    <property type="term" value="F:rRNA binding"/>
    <property type="evidence" value="ECO:0007669"/>
    <property type="project" value="UniProtKB-UniRule"/>
</dbReference>
<dbReference type="GO" id="GO:0003735">
    <property type="term" value="F:structural constituent of ribosome"/>
    <property type="evidence" value="ECO:0007669"/>
    <property type="project" value="InterPro"/>
</dbReference>
<dbReference type="GO" id="GO:0000049">
    <property type="term" value="F:tRNA binding"/>
    <property type="evidence" value="ECO:0007669"/>
    <property type="project" value="UniProtKB-UniRule"/>
</dbReference>
<dbReference type="GO" id="GO:0006412">
    <property type="term" value="P:translation"/>
    <property type="evidence" value="ECO:0007669"/>
    <property type="project" value="UniProtKB-UniRule"/>
</dbReference>
<dbReference type="FunFam" id="1.10.8.50:FF:000001">
    <property type="entry name" value="30S ribosomal protein S13"/>
    <property type="match status" value="1"/>
</dbReference>
<dbReference type="FunFam" id="4.10.910.10:FF:000001">
    <property type="entry name" value="30S ribosomal protein S13"/>
    <property type="match status" value="1"/>
</dbReference>
<dbReference type="Gene3D" id="1.10.8.50">
    <property type="match status" value="1"/>
</dbReference>
<dbReference type="Gene3D" id="4.10.910.10">
    <property type="entry name" value="30s ribosomal protein s13, domain 2"/>
    <property type="match status" value="1"/>
</dbReference>
<dbReference type="HAMAP" id="MF_01315">
    <property type="entry name" value="Ribosomal_uS13"/>
    <property type="match status" value="1"/>
</dbReference>
<dbReference type="InterPro" id="IPR027437">
    <property type="entry name" value="Rbsml_uS13_C"/>
</dbReference>
<dbReference type="InterPro" id="IPR001892">
    <property type="entry name" value="Ribosomal_uS13"/>
</dbReference>
<dbReference type="InterPro" id="IPR010979">
    <property type="entry name" value="Ribosomal_uS13-like_H2TH"/>
</dbReference>
<dbReference type="InterPro" id="IPR019980">
    <property type="entry name" value="Ribosomal_uS13_bac-type"/>
</dbReference>
<dbReference type="InterPro" id="IPR018269">
    <property type="entry name" value="Ribosomal_uS13_CS"/>
</dbReference>
<dbReference type="NCBIfam" id="TIGR03631">
    <property type="entry name" value="uS13_bact"/>
    <property type="match status" value="1"/>
</dbReference>
<dbReference type="PANTHER" id="PTHR10871">
    <property type="entry name" value="30S RIBOSOMAL PROTEIN S13/40S RIBOSOMAL PROTEIN S18"/>
    <property type="match status" value="1"/>
</dbReference>
<dbReference type="PANTHER" id="PTHR10871:SF1">
    <property type="entry name" value="SMALL RIBOSOMAL SUBUNIT PROTEIN US13M"/>
    <property type="match status" value="1"/>
</dbReference>
<dbReference type="Pfam" id="PF00416">
    <property type="entry name" value="Ribosomal_S13"/>
    <property type="match status" value="1"/>
</dbReference>
<dbReference type="PIRSF" id="PIRSF002134">
    <property type="entry name" value="Ribosomal_S13"/>
    <property type="match status" value="1"/>
</dbReference>
<dbReference type="SUPFAM" id="SSF46946">
    <property type="entry name" value="S13-like H2TH domain"/>
    <property type="match status" value="1"/>
</dbReference>
<dbReference type="PROSITE" id="PS00646">
    <property type="entry name" value="RIBOSOMAL_S13_1"/>
    <property type="match status" value="1"/>
</dbReference>
<dbReference type="PROSITE" id="PS50159">
    <property type="entry name" value="RIBOSOMAL_S13_2"/>
    <property type="match status" value="1"/>
</dbReference>
<proteinExistence type="inferred from homology"/>
<comment type="function">
    <text evidence="1">Located at the top of the head of the 30S subunit, it contacts several helices of the 16S rRNA. In the 70S ribosome it contacts the 23S rRNA (bridge B1a) and protein L5 of the 50S subunit (bridge B1b), connecting the 2 subunits; these bridges are implicated in subunit movement. Contacts the tRNAs in the A and P-sites.</text>
</comment>
<comment type="subunit">
    <text evidence="1">Part of the 30S ribosomal subunit. Forms a loose heterodimer with protein S19. Forms two bridges to the 50S subunit in the 70S ribosome.</text>
</comment>
<comment type="similarity">
    <text evidence="1">Belongs to the universal ribosomal protein uS13 family.</text>
</comment>
<sequence>MPRIIGIDIPAKKKLKISLTYIYGIGPALSKEIIARLQLNPEARAAELTEEEVGRLNALLQSDYVVEGDLRRRVQSDIKRLITIHAYRGQRHRLSLPVRGQRTKTNSRTRKGKRKTIAGKKK</sequence>
<keyword id="KW-0687">Ribonucleoprotein</keyword>
<keyword id="KW-0689">Ribosomal protein</keyword>
<keyword id="KW-0694">RNA-binding</keyword>
<keyword id="KW-0699">rRNA-binding</keyword>
<keyword id="KW-0820">tRNA-binding</keyword>